<proteinExistence type="inferred from homology"/>
<evidence type="ECO:0000255" key="1">
    <source>
        <dbReference type="HAMAP-Rule" id="MF_00022"/>
    </source>
</evidence>
<feature type="chain" id="PRO_0000330991" description="Glutamate--tRNA ligase">
    <location>
        <begin position="1"/>
        <end position="505"/>
    </location>
</feature>
<feature type="short sequence motif" description="'HIGH' region" evidence="1">
    <location>
        <begin position="16"/>
        <end position="26"/>
    </location>
</feature>
<feature type="short sequence motif" description="'KMSKS' region" evidence="1">
    <location>
        <begin position="257"/>
        <end position="261"/>
    </location>
</feature>
<feature type="binding site" evidence="1">
    <location>
        <position position="260"/>
    </location>
    <ligand>
        <name>ATP</name>
        <dbReference type="ChEBI" id="CHEBI:30616"/>
    </ligand>
</feature>
<gene>
    <name evidence="1" type="primary">gltX</name>
    <name type="ordered locus">PsycPRwf_0131</name>
</gene>
<dbReference type="EC" id="6.1.1.17" evidence="1"/>
<dbReference type="EMBL" id="CP000713">
    <property type="protein sequence ID" value="ABQ93091.1"/>
    <property type="molecule type" value="Genomic_DNA"/>
</dbReference>
<dbReference type="SMR" id="A5WBQ0"/>
<dbReference type="STRING" id="349106.PsycPRwf_0131"/>
<dbReference type="KEGG" id="prw:PsycPRwf_0131"/>
<dbReference type="eggNOG" id="COG0008">
    <property type="taxonomic scope" value="Bacteria"/>
</dbReference>
<dbReference type="HOGENOM" id="CLU_015768_6_3_6"/>
<dbReference type="GO" id="GO:0005829">
    <property type="term" value="C:cytosol"/>
    <property type="evidence" value="ECO:0007669"/>
    <property type="project" value="TreeGrafter"/>
</dbReference>
<dbReference type="GO" id="GO:0005524">
    <property type="term" value="F:ATP binding"/>
    <property type="evidence" value="ECO:0007669"/>
    <property type="project" value="UniProtKB-UniRule"/>
</dbReference>
<dbReference type="GO" id="GO:0004818">
    <property type="term" value="F:glutamate-tRNA ligase activity"/>
    <property type="evidence" value="ECO:0007669"/>
    <property type="project" value="UniProtKB-UniRule"/>
</dbReference>
<dbReference type="GO" id="GO:0000049">
    <property type="term" value="F:tRNA binding"/>
    <property type="evidence" value="ECO:0007669"/>
    <property type="project" value="InterPro"/>
</dbReference>
<dbReference type="GO" id="GO:0008270">
    <property type="term" value="F:zinc ion binding"/>
    <property type="evidence" value="ECO:0007669"/>
    <property type="project" value="InterPro"/>
</dbReference>
<dbReference type="GO" id="GO:0006424">
    <property type="term" value="P:glutamyl-tRNA aminoacylation"/>
    <property type="evidence" value="ECO:0007669"/>
    <property type="project" value="UniProtKB-UniRule"/>
</dbReference>
<dbReference type="CDD" id="cd00808">
    <property type="entry name" value="GluRS_core"/>
    <property type="match status" value="1"/>
</dbReference>
<dbReference type="FunFam" id="3.40.50.620:FF:000045">
    <property type="entry name" value="Glutamate--tRNA ligase, mitochondrial"/>
    <property type="match status" value="1"/>
</dbReference>
<dbReference type="Gene3D" id="1.10.10.350">
    <property type="match status" value="1"/>
</dbReference>
<dbReference type="Gene3D" id="3.40.50.620">
    <property type="entry name" value="HUPs"/>
    <property type="match status" value="1"/>
</dbReference>
<dbReference type="HAMAP" id="MF_00022">
    <property type="entry name" value="Glu_tRNA_synth_type1"/>
    <property type="match status" value="1"/>
</dbReference>
<dbReference type="InterPro" id="IPR045462">
    <property type="entry name" value="aa-tRNA-synth_I_cd-bd"/>
</dbReference>
<dbReference type="InterPro" id="IPR020751">
    <property type="entry name" value="aa-tRNA-synth_I_codon-bd_sub2"/>
</dbReference>
<dbReference type="InterPro" id="IPR001412">
    <property type="entry name" value="aa-tRNA-synth_I_CS"/>
</dbReference>
<dbReference type="InterPro" id="IPR008925">
    <property type="entry name" value="aa_tRNA-synth_I_cd-bd_sf"/>
</dbReference>
<dbReference type="InterPro" id="IPR004527">
    <property type="entry name" value="Glu-tRNA-ligase_bac/mito"/>
</dbReference>
<dbReference type="InterPro" id="IPR000924">
    <property type="entry name" value="Glu/Gln-tRNA-synth"/>
</dbReference>
<dbReference type="InterPro" id="IPR020058">
    <property type="entry name" value="Glu/Gln-tRNA-synth_Ib_cat-dom"/>
</dbReference>
<dbReference type="InterPro" id="IPR049940">
    <property type="entry name" value="GluQ/Sye"/>
</dbReference>
<dbReference type="InterPro" id="IPR033910">
    <property type="entry name" value="GluRS_core"/>
</dbReference>
<dbReference type="InterPro" id="IPR014729">
    <property type="entry name" value="Rossmann-like_a/b/a_fold"/>
</dbReference>
<dbReference type="NCBIfam" id="TIGR00464">
    <property type="entry name" value="gltX_bact"/>
    <property type="match status" value="1"/>
</dbReference>
<dbReference type="PANTHER" id="PTHR43311">
    <property type="entry name" value="GLUTAMATE--TRNA LIGASE"/>
    <property type="match status" value="1"/>
</dbReference>
<dbReference type="PANTHER" id="PTHR43311:SF2">
    <property type="entry name" value="GLUTAMATE--TRNA LIGASE, MITOCHONDRIAL-RELATED"/>
    <property type="match status" value="1"/>
</dbReference>
<dbReference type="Pfam" id="PF19269">
    <property type="entry name" value="Anticodon_2"/>
    <property type="match status" value="1"/>
</dbReference>
<dbReference type="Pfam" id="PF00749">
    <property type="entry name" value="tRNA-synt_1c"/>
    <property type="match status" value="1"/>
</dbReference>
<dbReference type="PRINTS" id="PR00987">
    <property type="entry name" value="TRNASYNTHGLU"/>
</dbReference>
<dbReference type="SUPFAM" id="SSF48163">
    <property type="entry name" value="An anticodon-binding domain of class I aminoacyl-tRNA synthetases"/>
    <property type="match status" value="1"/>
</dbReference>
<dbReference type="SUPFAM" id="SSF52374">
    <property type="entry name" value="Nucleotidylyl transferase"/>
    <property type="match status" value="1"/>
</dbReference>
<dbReference type="PROSITE" id="PS00178">
    <property type="entry name" value="AA_TRNA_LIGASE_I"/>
    <property type="match status" value="1"/>
</dbReference>
<keyword id="KW-0030">Aminoacyl-tRNA synthetase</keyword>
<keyword id="KW-0067">ATP-binding</keyword>
<keyword id="KW-0963">Cytoplasm</keyword>
<keyword id="KW-0436">Ligase</keyword>
<keyword id="KW-0547">Nucleotide-binding</keyword>
<keyword id="KW-0648">Protein biosynthesis</keyword>
<protein>
    <recommendedName>
        <fullName evidence="1">Glutamate--tRNA ligase</fullName>
        <ecNumber evidence="1">6.1.1.17</ecNumber>
    </recommendedName>
    <alternativeName>
        <fullName evidence="1">Glutamyl-tRNA synthetase</fullName>
        <shortName evidence="1">GluRS</shortName>
    </alternativeName>
</protein>
<accession>A5WBQ0</accession>
<organism>
    <name type="scientific">Psychrobacter sp. (strain PRwf-1)</name>
    <dbReference type="NCBI Taxonomy" id="349106"/>
    <lineage>
        <taxon>Bacteria</taxon>
        <taxon>Pseudomonadati</taxon>
        <taxon>Pseudomonadota</taxon>
        <taxon>Gammaproteobacteria</taxon>
        <taxon>Moraxellales</taxon>
        <taxon>Moraxellaceae</taxon>
        <taxon>Psychrobacter</taxon>
    </lineage>
</organism>
<reference key="1">
    <citation type="submission" date="2007-05" db="EMBL/GenBank/DDBJ databases">
        <title>Complete sequence of chromosome of Psychrobacter sp. PRwf-1.</title>
        <authorList>
            <consortium name="US DOE Joint Genome Institute"/>
            <person name="Copeland A."/>
            <person name="Lucas S."/>
            <person name="Lapidus A."/>
            <person name="Barry K."/>
            <person name="Detter J.C."/>
            <person name="Glavina del Rio T."/>
            <person name="Hammon N."/>
            <person name="Israni S."/>
            <person name="Dalin E."/>
            <person name="Tice H."/>
            <person name="Pitluck S."/>
            <person name="Chain P."/>
            <person name="Malfatti S."/>
            <person name="Shin M."/>
            <person name="Vergez L."/>
            <person name="Schmutz J."/>
            <person name="Larimer F."/>
            <person name="Land M."/>
            <person name="Hauser L."/>
            <person name="Kyrpides N."/>
            <person name="Kim E."/>
            <person name="Tiedje J."/>
            <person name="Richardson P."/>
        </authorList>
    </citation>
    <scope>NUCLEOTIDE SEQUENCE [LARGE SCALE GENOMIC DNA]</scope>
    <source>
        <strain>PRwf-1</strain>
    </source>
</reference>
<sequence length="505" mass="57225">MTQTTAQRPVRTRIAPSPTGFPHVGTAYIALFNLAFAKAHGGEFILRIEDTDQSRSTEQSEQMILDALRWVGLDWAEGPDNGGPHAPYRQSERSEIYKQYAQELLDKGHAFRCFCTPEELDAMRAEQIARGENPHYDGRYANLPREESDKMAAEGKPFVIRMKVPTEGVCKVQDMLRGEVEIPWEQVDMQVLLKTDGLPTYHLANVVDDHLMEITHVIRGEEWLNSAPKHQLLYDYFGWEMPVLCHMPLLRNPDKSKLSKRKNPTSITYYRDAGVLPEALLNYLGRMGYSMPDDKEIFTLDEMIESFDITRVSLGGPIFDLEKLHWLNGEWLRALTPEQLKNKILDWANDSDKLTAIAAAIQPRIHLLSDAVNWGGFYFQNLPSITAESFEHKTLTPEQIMEILQIATWKLEALPEWSEDNIFKTLKGLSAALDIKLRDMMAPFFIAIAGSTSSTPVMNSMYVIGADMTLTRLRHAVEVLGGIGKKKLKKLEKTAADMPDFLAAE</sequence>
<comment type="function">
    <text evidence="1">Catalyzes the attachment of glutamate to tRNA(Glu) in a two-step reaction: glutamate is first activated by ATP to form Glu-AMP and then transferred to the acceptor end of tRNA(Glu).</text>
</comment>
<comment type="catalytic activity">
    <reaction evidence="1">
        <text>tRNA(Glu) + L-glutamate + ATP = L-glutamyl-tRNA(Glu) + AMP + diphosphate</text>
        <dbReference type="Rhea" id="RHEA:23540"/>
        <dbReference type="Rhea" id="RHEA-COMP:9663"/>
        <dbReference type="Rhea" id="RHEA-COMP:9680"/>
        <dbReference type="ChEBI" id="CHEBI:29985"/>
        <dbReference type="ChEBI" id="CHEBI:30616"/>
        <dbReference type="ChEBI" id="CHEBI:33019"/>
        <dbReference type="ChEBI" id="CHEBI:78442"/>
        <dbReference type="ChEBI" id="CHEBI:78520"/>
        <dbReference type="ChEBI" id="CHEBI:456215"/>
        <dbReference type="EC" id="6.1.1.17"/>
    </reaction>
</comment>
<comment type="subunit">
    <text evidence="1">Monomer.</text>
</comment>
<comment type="subcellular location">
    <subcellularLocation>
        <location evidence="1">Cytoplasm</location>
    </subcellularLocation>
</comment>
<comment type="similarity">
    <text evidence="1">Belongs to the class-I aminoacyl-tRNA synthetase family. Glutamate--tRNA ligase type 1 subfamily.</text>
</comment>
<name>SYE_PSYWF</name>